<comment type="function">
    <text evidence="1">One of the primary rRNA binding proteins, it binds directly near the 3'-end of the 23S rRNA, where it nucleates assembly of the 50S subunit.</text>
</comment>
<comment type="subunit">
    <text evidence="1">Part of the 50S ribosomal subunit. Forms a cluster with proteins L14 and L19.</text>
</comment>
<comment type="PTM">
    <text evidence="1">Methylated by PrmB.</text>
</comment>
<comment type="similarity">
    <text evidence="1">Belongs to the universal ribosomal protein uL3 family.</text>
</comment>
<name>RL3_VESOH</name>
<accession>A5CXK4</accession>
<protein>
    <recommendedName>
        <fullName evidence="1">Large ribosomal subunit protein uL3</fullName>
    </recommendedName>
    <alternativeName>
        <fullName evidence="2">50S ribosomal protein L3</fullName>
    </alternativeName>
</protein>
<reference key="1">
    <citation type="journal article" date="2007" name="Curr. Biol.">
        <title>Reduced genome of the thioautotrophic intracellular symbiont in a deep-sea clam, Calyptogena okutanii.</title>
        <authorList>
            <person name="Kuwahara H."/>
            <person name="Yoshida T."/>
            <person name="Takaki Y."/>
            <person name="Shimamura S."/>
            <person name="Nishi S."/>
            <person name="Harada M."/>
            <person name="Matsuyama K."/>
            <person name="Takishita K."/>
            <person name="Kawato M."/>
            <person name="Uematsu K."/>
            <person name="Fujiwara Y."/>
            <person name="Sato T."/>
            <person name="Kato C."/>
            <person name="Kitagawa M."/>
            <person name="Kato I."/>
            <person name="Maruyama T."/>
        </authorList>
    </citation>
    <scope>NUCLEOTIDE SEQUENCE [LARGE SCALE GENOMIC DNA]</scope>
    <source>
        <strain>HA</strain>
    </source>
</reference>
<organism>
    <name type="scientific">Vesicomyosocius okutanii subsp. Calyptogena okutanii (strain HA)</name>
    <dbReference type="NCBI Taxonomy" id="412965"/>
    <lineage>
        <taxon>Bacteria</taxon>
        <taxon>Pseudomonadati</taxon>
        <taxon>Pseudomonadota</taxon>
        <taxon>Gammaproteobacteria</taxon>
        <taxon>Candidatus Pseudothioglobaceae</taxon>
        <taxon>Candidatus Vesicomyosocius</taxon>
    </lineage>
</organism>
<dbReference type="EMBL" id="AP009247">
    <property type="protein sequence ID" value="BAF61299.1"/>
    <property type="molecule type" value="Genomic_DNA"/>
</dbReference>
<dbReference type="RefSeq" id="WP_011929569.1">
    <property type="nucleotide sequence ID" value="NC_009465.1"/>
</dbReference>
<dbReference type="SMR" id="A5CXK4"/>
<dbReference type="STRING" id="412965.COSY_0169"/>
<dbReference type="KEGG" id="vok:COSY_0169"/>
<dbReference type="eggNOG" id="COG0087">
    <property type="taxonomic scope" value="Bacteria"/>
</dbReference>
<dbReference type="HOGENOM" id="CLU_044142_4_1_6"/>
<dbReference type="OrthoDB" id="9806135at2"/>
<dbReference type="Proteomes" id="UP000000247">
    <property type="component" value="Chromosome"/>
</dbReference>
<dbReference type="GO" id="GO:0022625">
    <property type="term" value="C:cytosolic large ribosomal subunit"/>
    <property type="evidence" value="ECO:0007669"/>
    <property type="project" value="TreeGrafter"/>
</dbReference>
<dbReference type="GO" id="GO:0019843">
    <property type="term" value="F:rRNA binding"/>
    <property type="evidence" value="ECO:0007669"/>
    <property type="project" value="UniProtKB-UniRule"/>
</dbReference>
<dbReference type="GO" id="GO:0003735">
    <property type="term" value="F:structural constituent of ribosome"/>
    <property type="evidence" value="ECO:0007669"/>
    <property type="project" value="InterPro"/>
</dbReference>
<dbReference type="GO" id="GO:0006412">
    <property type="term" value="P:translation"/>
    <property type="evidence" value="ECO:0007669"/>
    <property type="project" value="UniProtKB-UniRule"/>
</dbReference>
<dbReference type="FunFam" id="2.40.30.10:FF:000004">
    <property type="entry name" value="50S ribosomal protein L3"/>
    <property type="match status" value="1"/>
</dbReference>
<dbReference type="Gene3D" id="3.30.160.810">
    <property type="match status" value="1"/>
</dbReference>
<dbReference type="Gene3D" id="2.40.30.10">
    <property type="entry name" value="Translation factors"/>
    <property type="match status" value="1"/>
</dbReference>
<dbReference type="HAMAP" id="MF_01325_B">
    <property type="entry name" value="Ribosomal_uL3_B"/>
    <property type="match status" value="1"/>
</dbReference>
<dbReference type="InterPro" id="IPR000597">
    <property type="entry name" value="Ribosomal_uL3"/>
</dbReference>
<dbReference type="InterPro" id="IPR019927">
    <property type="entry name" value="Ribosomal_uL3_bac/org-type"/>
</dbReference>
<dbReference type="InterPro" id="IPR009000">
    <property type="entry name" value="Transl_B-barrel_sf"/>
</dbReference>
<dbReference type="NCBIfam" id="TIGR03625">
    <property type="entry name" value="L3_bact"/>
    <property type="match status" value="1"/>
</dbReference>
<dbReference type="PANTHER" id="PTHR11229">
    <property type="entry name" value="50S RIBOSOMAL PROTEIN L3"/>
    <property type="match status" value="1"/>
</dbReference>
<dbReference type="PANTHER" id="PTHR11229:SF16">
    <property type="entry name" value="LARGE RIBOSOMAL SUBUNIT PROTEIN UL3C"/>
    <property type="match status" value="1"/>
</dbReference>
<dbReference type="Pfam" id="PF00297">
    <property type="entry name" value="Ribosomal_L3"/>
    <property type="match status" value="1"/>
</dbReference>
<dbReference type="SUPFAM" id="SSF50447">
    <property type="entry name" value="Translation proteins"/>
    <property type="match status" value="1"/>
</dbReference>
<keyword id="KW-0488">Methylation</keyword>
<keyword id="KW-1185">Reference proteome</keyword>
<keyword id="KW-0687">Ribonucleoprotein</keyword>
<keyword id="KW-0689">Ribosomal protein</keyword>
<keyword id="KW-0694">RNA-binding</keyword>
<keyword id="KW-0699">rRNA-binding</keyword>
<feature type="chain" id="PRO_1000141940" description="Large ribosomal subunit protein uL3">
    <location>
        <begin position="1"/>
        <end position="241"/>
    </location>
</feature>
<feature type="modified residue" description="N5-methylglutamine" evidence="1">
    <location>
        <position position="157"/>
    </location>
</feature>
<evidence type="ECO:0000255" key="1">
    <source>
        <dbReference type="HAMAP-Rule" id="MF_01325"/>
    </source>
</evidence>
<evidence type="ECO:0000305" key="2"/>
<proteinExistence type="inferred from homology"/>
<sequence>MAIDLVGQKIGMTRLISDDGSIMPVSVIKIEPNRIVQTRTIDIDGYRAIQVTTGKKVNKKGEAKVRRISAAIKGHYAKASQEIGLGLWEFKLEDNEITNATSIDISLFGAGHYVDVIGKSKGKGFQGGVKLHNFQMQDATHGNSISHRAIGSTGQCQEPGRVFKGKKMAGHMGNKQVTQECLKVVKVDIEKSVILVKGSIPGAIKGFVKVSLSPKKDNSNKEVSKNIKNQVTNEVDQTKQM</sequence>
<gene>
    <name evidence="1" type="primary">rplC</name>
    <name type="ordered locus">COSY_0169</name>
</gene>